<feature type="chain" id="PRO_0000408352" description="Zinc finger FYVE domain-containing protein 26">
    <location>
        <begin position="1"/>
        <end position="2542"/>
    </location>
</feature>
<feature type="zinc finger region" description="FYVE-type" evidence="5">
    <location>
        <begin position="1815"/>
        <end position="1875"/>
    </location>
</feature>
<feature type="region of interest" description="Disordered" evidence="6">
    <location>
        <begin position="591"/>
        <end position="658"/>
    </location>
</feature>
<feature type="region of interest" description="Disordered" evidence="6">
    <location>
        <begin position="740"/>
        <end position="811"/>
    </location>
</feature>
<feature type="region of interest" description="Disordered" evidence="6">
    <location>
        <begin position="1273"/>
        <end position="1292"/>
    </location>
</feature>
<feature type="region of interest" description="Disordered" evidence="6">
    <location>
        <begin position="1746"/>
        <end position="1807"/>
    </location>
</feature>
<feature type="coiled-coil region" evidence="4">
    <location>
        <begin position="866"/>
        <end position="891"/>
    </location>
</feature>
<feature type="coiled-coil region" evidence="4">
    <location>
        <begin position="1495"/>
        <end position="1522"/>
    </location>
</feature>
<feature type="compositionally biased region" description="Basic residues" evidence="6">
    <location>
        <begin position="752"/>
        <end position="772"/>
    </location>
</feature>
<feature type="compositionally biased region" description="Low complexity" evidence="6">
    <location>
        <begin position="785"/>
        <end position="803"/>
    </location>
</feature>
<feature type="compositionally biased region" description="Basic and acidic residues" evidence="6">
    <location>
        <begin position="1281"/>
        <end position="1290"/>
    </location>
</feature>
<feature type="compositionally biased region" description="Low complexity" evidence="6">
    <location>
        <begin position="1757"/>
        <end position="1779"/>
    </location>
</feature>
<feature type="binding site" evidence="5">
    <location>
        <position position="1821"/>
    </location>
    <ligand>
        <name>Zn(2+)</name>
        <dbReference type="ChEBI" id="CHEBI:29105"/>
        <label>1</label>
    </ligand>
</feature>
<feature type="binding site" evidence="5">
    <location>
        <position position="1824"/>
    </location>
    <ligand>
        <name>Zn(2+)</name>
        <dbReference type="ChEBI" id="CHEBI:29105"/>
        <label>1</label>
    </ligand>
</feature>
<feature type="binding site" evidence="5">
    <location>
        <position position="1838"/>
    </location>
    <ligand>
        <name>Zn(2+)</name>
        <dbReference type="ChEBI" id="CHEBI:29105"/>
        <label>2</label>
    </ligand>
</feature>
<feature type="binding site" evidence="5">
    <location>
        <position position="1841"/>
    </location>
    <ligand>
        <name>Zn(2+)</name>
        <dbReference type="ChEBI" id="CHEBI:29105"/>
        <label>2</label>
    </ligand>
</feature>
<feature type="binding site" evidence="5">
    <location>
        <position position="1846"/>
    </location>
    <ligand>
        <name>Zn(2+)</name>
        <dbReference type="ChEBI" id="CHEBI:29105"/>
        <label>1</label>
    </ligand>
</feature>
<feature type="binding site" evidence="5">
    <location>
        <position position="1849"/>
    </location>
    <ligand>
        <name>Zn(2+)</name>
        <dbReference type="ChEBI" id="CHEBI:29105"/>
        <label>1</label>
    </ligand>
</feature>
<feature type="binding site" evidence="5">
    <location>
        <position position="1867"/>
    </location>
    <ligand>
        <name>Zn(2+)</name>
        <dbReference type="ChEBI" id="CHEBI:29105"/>
        <label>2</label>
    </ligand>
</feature>
<feature type="binding site" evidence="5">
    <location>
        <position position="1870"/>
    </location>
    <ligand>
        <name>Zn(2+)</name>
        <dbReference type="ChEBI" id="CHEBI:29105"/>
        <label>2</label>
    </ligand>
</feature>
<feature type="modified residue" description="Phosphoserine" evidence="8">
    <location>
        <position position="612"/>
    </location>
</feature>
<feature type="modified residue" description="Phosphoserine" evidence="8">
    <location>
        <position position="616"/>
    </location>
</feature>
<feature type="modified residue" description="Phosphoserine" evidence="3">
    <location>
        <position position="798"/>
    </location>
</feature>
<feature type="modified residue" description="Phosphoserine" evidence="2">
    <location>
        <position position="1739"/>
    </location>
</feature>
<feature type="modified residue" description="Phosphoserine" evidence="3">
    <location>
        <position position="1761"/>
    </location>
</feature>
<feature type="modified residue" description="Phosphoserine" evidence="2">
    <location>
        <position position="1783"/>
    </location>
</feature>
<feature type="modified residue" description="Phosphoserine" evidence="2">
    <location>
        <position position="1785"/>
    </location>
</feature>
<proteinExistence type="evidence at protein level"/>
<protein>
    <recommendedName>
        <fullName>Zinc finger FYVE domain-containing protein 26</fullName>
    </recommendedName>
</protein>
<organism>
    <name type="scientific">Rattus norvegicus</name>
    <name type="common">Rat</name>
    <dbReference type="NCBI Taxonomy" id="10116"/>
    <lineage>
        <taxon>Eukaryota</taxon>
        <taxon>Metazoa</taxon>
        <taxon>Chordata</taxon>
        <taxon>Craniata</taxon>
        <taxon>Vertebrata</taxon>
        <taxon>Euteleostomi</taxon>
        <taxon>Mammalia</taxon>
        <taxon>Eutheria</taxon>
        <taxon>Euarchontoglires</taxon>
        <taxon>Glires</taxon>
        <taxon>Rodentia</taxon>
        <taxon>Myomorpha</taxon>
        <taxon>Muroidea</taxon>
        <taxon>Muridae</taxon>
        <taxon>Murinae</taxon>
        <taxon>Rattus</taxon>
    </lineage>
</organism>
<sequence>MSYPFGKEETTTEKQLFEFFCECLRRGDWELAQACVPQLQRGQGEIPQKVEDILQALVQCPILLRCGPDINPQRLAWLWLLVLEKWLPPEKKLLSTVFRRKLEFLFLSEDLQGGIPETILKELFETLAQGPAGCTSDRSQRWESGAPQLSPEAVSMLWNLLKQAPGPAQALLELLLEERHSASLCHSSLQKSLLDLIRKALQTLRDPASQPAGVTDAVCGALQALCCTAELPEGEWHVLCEELLETCRTEGSPLKEERLLGCLLHKAGRSLLSLYGHTYAEKVAERPPKASLSGKDHPDPERAMLALFSTPDPAHAWKMAFFYCLSNNKHFLEQILVTALTLLKEEDFPSLGYLLDREFRPLSHLLVLLGWTHCQSLESAKRLLQTLYRNQDQGHDELLRDACEGLWAHLEVLEWCVQQSSSLIPKRELLCHLHGGDSHSVLYSLHHLTNLPALREEEVLKLLQKVPTKDLQGEHDTHDASVPEHLSQCQSLTLYQGFCAMKYAVYALCVNSHQHSQCPDCRDSASSEELALVEPGRDSLPSPGASHLFPTYLARCRQYLQRIPDSLCLEILENIFSLLLITSADLHPEPHLPEDYAEDDDIEGKGPWGLWSPSESPQHIAATERRSERASMGPRDLAPTGPGCPKGEPKDNSPGPHTHSFLDLKHFTSSLSGFLADEFAIGAFLSLIQEQLNELSSHRTPEETELLEDQSCWAARDGLQGRLHRFSKVLSEAQWRYKVVTSNQSSEEQPSRRYRPTAKRHSSLRRGRRTRRTRADGRERGSNPSLEGTSSELSTSTSEGSLSAVSGQVEADNRFQPQPQSSIIPMMFSPPESLLASCILRGNFAEAHQVVLMFNLKSSPSAGELMFVERYQEVIQELARVEHKIENQNSDGGNNTVRRTGSGRSTLQAIGSAAAAGMVFYSISDVTDKLLSPSEDPIPTLQEDFWINAALTETNTPLRGVLEDLSPPAMAAFDLACCQCQLWKTCKQLLETAERRLSSSLEGRGRRLDQVVLNPDGMRGFPFVLQQISKILSYPLTVTGLTKSETLEERGGGAPRCSISELLQMCWPSLTEDCIASHTSLSQQLDQALQSLREALTLSEPKSTPLTCLVEQAAQKAPEAEAHPVHIQSQLLQKTLGKQTLAGPRQTDYVGAFFSYCSSLAKVLLRSLSSDPDNVEVKVGNPFVLLQQSSSQLVSHLLLERQVPPDRLAALLAQEHLNLSVPQVIVSCCCEPLTLCLSRQSQQASSLTAHLGMLAQGHASHLLDGLPLSVLGSPRPSENPSAERKSDSSPKDSLPAFTASALAFLKSRSKILAMVACLRASRGTKVSRPSLSWKELRGRREAPLTAEKVAQECEHLLEQFPVFEAALLANWEPLQQASESRPSLAASLCGQARLSTVLLGLHSTLAQDVVTEAFEEALVARDWPRALQLIDVYGQDSDDLSSVRDSVLTCATVCDKEGWQYLFPVKDASLRSQLALRFVDKWPLESCLEILAYCVSDMAVPEELKSELQRKLTELRVYQKILGLQDPPVWCDWQTLRSCCAEDPSTVMDMMLGSQEYELCEEWGCLYPIPREHLVSLHHKHLLYLLERREYEKALQLLQRIPDPTMCLEVTERSLDQHPSLATSHFLANYLTSHFYGELTTDRHHEIQALYMGSKVLLTLPEQHRASYAHLSSSPLLMLEQLLMNMKVDWATTAVQTLQQLLAGQDIGFTLDEVDSLLSRYAGKALDLPYPLREKRSDSMIHLQEPVHQASDPETLSRSSSAEFSAAAAAPAPAAPGSALVCSPSPKERAFPQTQPPLEFVPPETPPARDQWVPDETESMCMVCCREHFTMFNRRHHCRRCGRLVCGSCSTKKMVVEGCRENPTRVCDQCYSYYNKDAPEESPCQSEVPDSAKNESPSYSAVVRIPKATEVEWILSLNEEENELVRSEFYYEQAPSASLCIAILNLHRDSIACGHQLIEHCCRLSRGLTNPEVDAGLLIDIMKQLLFSAKMMFVKAGQSQDLALCDSYISKVDVLHILVAAAYRHMPSLDQILQPASVTRLRNQLLEAEYYQLGVEVSTKTGLDSTGAWHAWGMACLKAGNLTAAREKFSRCLKPPLDLNQLSHGSRLVQDVVEYLESTVRPLVSLQDDDYFATLRELEATLRTQSLFLEAIPDGKIMNNTYYQECLFYLHNYSTNLAIISFYMRHNCLREALLHLLNKESPAEVFIEGIFQPSYKSGKLHTLENLLESIDPTLESWGAYLIAACQHLQKKNYYHILYELQQFMKDQVRAAMTCIRFFSHKAKSYTELGEKLSWLLKAKDHLKIYLQENSRSSGRKKTTFFRKKMAAADVSRHMNTLQLQMEVTRFLHRCESARTSQITTLPLPTLFGNNHMKMEVACQVMLGGKNVEDGFGIAFRVLQDFQLDAAVTYCRAARQLVEKEKYGEIRQLLKCVSESGMAAKSDGDTILLNCLEAFKRIPPQELEGLIQAIHSDDNKVRAYLTCCKLRSAYLIAVKQEHTQAAALVQQVQQAAKSSGDSVVQDICAQWLLTSHSRGAHGSGSRK</sequence>
<comment type="function">
    <text evidence="1">Phosphatidylinositol 3-phosphate-binding protein required for the abscission step in cytokinesis: recruited to the midbody during cytokinesis and acts as a regulator of abscission. May also be required for efficient homologous recombination DNA double-strand break repair (By similarity).</text>
</comment>
<comment type="subunit">
    <text evidence="1">Interacts with AP5Z1, AP5B1, AP5S1 and SPG11. Interacts with TTC19 and KIF13A (By similarity).</text>
</comment>
<comment type="subcellular location">
    <subcellularLocation>
        <location evidence="1">Cytoplasm</location>
        <location evidence="1">Cytoskeleton</location>
        <location evidence="1">Microtubule organizing center</location>
        <location evidence="1">Centrosome</location>
    </subcellularLocation>
    <subcellularLocation>
        <location evidence="1">Midbody</location>
    </subcellularLocation>
    <text evidence="1">Localizes to the centrosome during all stages of the cell cycle. Recruited to the midbody during cytokinesis by KIF13A (By similarity).</text>
</comment>
<comment type="domain">
    <text evidence="1">The FYVE-type zinc finger mediates binding to phosphatidylinositol 3-phosphate and recruitment to the midbody during cytokinesis.</text>
</comment>
<comment type="similarity">
    <text evidence="7">Belongs to the ZFYVE26 family.</text>
</comment>
<keyword id="KW-0131">Cell cycle</keyword>
<keyword id="KW-0132">Cell division</keyword>
<keyword id="KW-0175">Coiled coil</keyword>
<keyword id="KW-0963">Cytoplasm</keyword>
<keyword id="KW-0206">Cytoskeleton</keyword>
<keyword id="KW-0227">DNA damage</keyword>
<keyword id="KW-0234">DNA repair</keyword>
<keyword id="KW-0446">Lipid-binding</keyword>
<keyword id="KW-0479">Metal-binding</keyword>
<keyword id="KW-0597">Phosphoprotein</keyword>
<keyword id="KW-1185">Reference proteome</keyword>
<keyword id="KW-0862">Zinc</keyword>
<keyword id="KW-0863">Zinc-finger</keyword>
<gene>
    <name type="primary">Zfyve26</name>
</gene>
<dbReference type="EMBL" id="CH473947">
    <property type="protein sequence ID" value="EDM03727.1"/>
    <property type="molecule type" value="Genomic_DNA"/>
</dbReference>
<dbReference type="RefSeq" id="NP_001101508.1">
    <property type="nucleotide sequence ID" value="NM_001108038.1"/>
</dbReference>
<dbReference type="FunCoup" id="D4A8G9">
    <property type="interactions" value="3503"/>
</dbReference>
<dbReference type="STRING" id="10116.ENSRNOP00000074087"/>
<dbReference type="iPTMnet" id="D4A8G9"/>
<dbReference type="PhosphoSitePlus" id="D4A8G9"/>
<dbReference type="PaxDb" id="10116-ENSRNOP00000016380"/>
<dbReference type="PeptideAtlas" id="D4A8G9"/>
<dbReference type="GeneID" id="314265"/>
<dbReference type="KEGG" id="rno:314265"/>
<dbReference type="UCSC" id="RGD:1307820">
    <property type="organism name" value="rat"/>
</dbReference>
<dbReference type="AGR" id="RGD:1307820"/>
<dbReference type="CTD" id="23503"/>
<dbReference type="RGD" id="1307820">
    <property type="gene designation" value="Zfyve26"/>
</dbReference>
<dbReference type="eggNOG" id="KOG1811">
    <property type="taxonomic scope" value="Eukaryota"/>
</dbReference>
<dbReference type="InParanoid" id="D4A8G9"/>
<dbReference type="PhylomeDB" id="D4A8G9"/>
<dbReference type="TreeFam" id="TF324517"/>
<dbReference type="PRO" id="PR:D4A8G9"/>
<dbReference type="Proteomes" id="UP000002494">
    <property type="component" value="Unplaced"/>
</dbReference>
<dbReference type="Proteomes" id="UP000234681">
    <property type="component" value="Chromosome 6"/>
</dbReference>
<dbReference type="GO" id="GO:0005813">
    <property type="term" value="C:centrosome"/>
    <property type="evidence" value="ECO:0000250"/>
    <property type="project" value="UniProtKB"/>
</dbReference>
<dbReference type="GO" id="GO:0005769">
    <property type="term" value="C:early endosome"/>
    <property type="evidence" value="ECO:0000266"/>
    <property type="project" value="RGD"/>
</dbReference>
<dbReference type="GO" id="GO:0005770">
    <property type="term" value="C:late endosome"/>
    <property type="evidence" value="ECO:0000266"/>
    <property type="project" value="RGD"/>
</dbReference>
<dbReference type="GO" id="GO:0005764">
    <property type="term" value="C:lysosome"/>
    <property type="evidence" value="ECO:0000266"/>
    <property type="project" value="RGD"/>
</dbReference>
<dbReference type="GO" id="GO:0030496">
    <property type="term" value="C:midbody"/>
    <property type="evidence" value="ECO:0000250"/>
    <property type="project" value="UniProtKB"/>
</dbReference>
<dbReference type="GO" id="GO:0032266">
    <property type="term" value="F:phosphatidylinositol-3-phosphate binding"/>
    <property type="evidence" value="ECO:0000250"/>
    <property type="project" value="UniProtKB"/>
</dbReference>
<dbReference type="GO" id="GO:0019901">
    <property type="term" value="F:protein kinase binding"/>
    <property type="evidence" value="ECO:0000266"/>
    <property type="project" value="RGD"/>
</dbReference>
<dbReference type="GO" id="GO:0008270">
    <property type="term" value="F:zinc ion binding"/>
    <property type="evidence" value="ECO:0007669"/>
    <property type="project" value="UniProtKB-KW"/>
</dbReference>
<dbReference type="GO" id="GO:1905037">
    <property type="term" value="P:autophagosome organization"/>
    <property type="evidence" value="ECO:0000266"/>
    <property type="project" value="RGD"/>
</dbReference>
<dbReference type="GO" id="GO:0000724">
    <property type="term" value="P:double-strand break repair via homologous recombination"/>
    <property type="evidence" value="ECO:0000266"/>
    <property type="project" value="RGD"/>
</dbReference>
<dbReference type="GO" id="GO:0007040">
    <property type="term" value="P:lysosome organization"/>
    <property type="evidence" value="ECO:0000266"/>
    <property type="project" value="RGD"/>
</dbReference>
<dbReference type="GO" id="GO:0000281">
    <property type="term" value="P:mitotic cytokinesis"/>
    <property type="evidence" value="ECO:0007669"/>
    <property type="project" value="InterPro"/>
</dbReference>
<dbReference type="GO" id="GO:0032465">
    <property type="term" value="P:regulation of cytokinesis"/>
    <property type="evidence" value="ECO:0000250"/>
    <property type="project" value="UniProtKB"/>
</dbReference>
<dbReference type="CDD" id="cd15724">
    <property type="entry name" value="FYVE_ZFY26"/>
    <property type="match status" value="1"/>
</dbReference>
<dbReference type="FunFam" id="3.30.40.10:FF:000295">
    <property type="entry name" value="Zinc finger, FYVE domain-containing 26"/>
    <property type="match status" value="1"/>
</dbReference>
<dbReference type="Gene3D" id="3.30.40.10">
    <property type="entry name" value="Zinc/RING finger domain, C3HC4 (zinc finger)"/>
    <property type="match status" value="1"/>
</dbReference>
<dbReference type="InterPro" id="IPR028730">
    <property type="entry name" value="ZFYVE26"/>
</dbReference>
<dbReference type="InterPro" id="IPR000306">
    <property type="entry name" value="Znf_FYVE"/>
</dbReference>
<dbReference type="InterPro" id="IPR017455">
    <property type="entry name" value="Znf_FYVE-rel"/>
</dbReference>
<dbReference type="InterPro" id="IPR011011">
    <property type="entry name" value="Znf_FYVE_PHD"/>
</dbReference>
<dbReference type="InterPro" id="IPR013083">
    <property type="entry name" value="Znf_RING/FYVE/PHD"/>
</dbReference>
<dbReference type="PANTHER" id="PTHR46591">
    <property type="entry name" value="ZINC FINGER FYVE DOMAIN-CONTAINING PROTEIN 26"/>
    <property type="match status" value="1"/>
</dbReference>
<dbReference type="PANTHER" id="PTHR46591:SF1">
    <property type="entry name" value="ZINC FINGER FYVE DOMAIN-CONTAINING PROTEIN 26"/>
    <property type="match status" value="1"/>
</dbReference>
<dbReference type="Pfam" id="PF01363">
    <property type="entry name" value="FYVE"/>
    <property type="match status" value="1"/>
</dbReference>
<dbReference type="SMART" id="SM00064">
    <property type="entry name" value="FYVE"/>
    <property type="match status" value="1"/>
</dbReference>
<dbReference type="SUPFAM" id="SSF57903">
    <property type="entry name" value="FYVE/PHD zinc finger"/>
    <property type="match status" value="1"/>
</dbReference>
<dbReference type="PROSITE" id="PS50178">
    <property type="entry name" value="ZF_FYVE"/>
    <property type="match status" value="1"/>
</dbReference>
<reference key="1">
    <citation type="submission" date="2005-07" db="EMBL/GenBank/DDBJ databases">
        <authorList>
            <person name="Mural R.J."/>
            <person name="Adams M.D."/>
            <person name="Myers E.W."/>
            <person name="Smith H.O."/>
            <person name="Venter J.C."/>
        </authorList>
    </citation>
    <scope>NUCLEOTIDE SEQUENCE [LARGE SCALE GENOMIC DNA]</scope>
    <source>
        <strain>Brown Norway</strain>
    </source>
</reference>
<reference key="2">
    <citation type="journal article" date="2012" name="Nat. Commun.">
        <title>Quantitative maps of protein phosphorylation sites across 14 different rat organs and tissues.</title>
        <authorList>
            <person name="Lundby A."/>
            <person name="Secher A."/>
            <person name="Lage K."/>
            <person name="Nordsborg N.B."/>
            <person name="Dmytriyev A."/>
            <person name="Lundby C."/>
            <person name="Olsen J.V."/>
        </authorList>
    </citation>
    <scope>PHOSPHORYLATION [LARGE SCALE ANALYSIS] AT SER-612 AND SER-616</scope>
    <scope>IDENTIFICATION BY MASS SPECTROMETRY [LARGE SCALE ANALYSIS]</scope>
</reference>
<accession>D4A8G9</accession>
<accession>D3ZB97</accession>
<accession>D3ZBA4</accession>
<evidence type="ECO:0000250" key="1"/>
<evidence type="ECO:0000250" key="2">
    <source>
        <dbReference type="UniProtKB" id="Q5DU37"/>
    </source>
</evidence>
<evidence type="ECO:0000250" key="3">
    <source>
        <dbReference type="UniProtKB" id="Q68DK2"/>
    </source>
</evidence>
<evidence type="ECO:0000255" key="4"/>
<evidence type="ECO:0000255" key="5">
    <source>
        <dbReference type="PROSITE-ProRule" id="PRU00091"/>
    </source>
</evidence>
<evidence type="ECO:0000256" key="6">
    <source>
        <dbReference type="SAM" id="MobiDB-lite"/>
    </source>
</evidence>
<evidence type="ECO:0000305" key="7"/>
<evidence type="ECO:0007744" key="8">
    <source>
    </source>
</evidence>
<name>ZFY26_RAT</name>